<protein>
    <recommendedName>
        <fullName>5-hydroxytryptamine receptor 1E</fullName>
        <shortName>5-HT-1E</shortName>
        <shortName>5-HT1E</shortName>
    </recommendedName>
    <alternativeName>
        <fullName>Serotonin receptor 1E</fullName>
    </alternativeName>
</protein>
<dbReference type="EMBL" id="AY344643">
    <property type="protein sequence ID" value="AAR05654.1"/>
    <property type="molecule type" value="mRNA"/>
</dbReference>
<dbReference type="RefSeq" id="NP_001166222.1">
    <property type="nucleotide sequence ID" value="NM_001172751.1"/>
</dbReference>
<dbReference type="SMR" id="Q6VB83"/>
<dbReference type="STRING" id="10141.ENSCPOP00000015883"/>
<dbReference type="GlyCosmos" id="Q6VB83">
    <property type="glycosylation" value="2 sites, No reported glycans"/>
</dbReference>
<dbReference type="GeneID" id="100379275"/>
<dbReference type="KEGG" id="cpoc:100379275"/>
<dbReference type="CTD" id="3354"/>
<dbReference type="eggNOG" id="KOG3656">
    <property type="taxonomic scope" value="Eukaryota"/>
</dbReference>
<dbReference type="InParanoid" id="Q6VB83"/>
<dbReference type="OrthoDB" id="5956310at2759"/>
<dbReference type="Proteomes" id="UP000005447">
    <property type="component" value="Unassembled WGS sequence"/>
</dbReference>
<dbReference type="GO" id="GO:0005886">
    <property type="term" value="C:plasma membrane"/>
    <property type="evidence" value="ECO:0000250"/>
    <property type="project" value="UniProtKB"/>
</dbReference>
<dbReference type="GO" id="GO:0004993">
    <property type="term" value="F:G protein-coupled serotonin receptor activity"/>
    <property type="evidence" value="ECO:0000250"/>
    <property type="project" value="UniProtKB"/>
</dbReference>
<dbReference type="GO" id="GO:0071880">
    <property type="term" value="P:adenylate cyclase-activating adrenergic receptor signaling pathway"/>
    <property type="evidence" value="ECO:0007669"/>
    <property type="project" value="TreeGrafter"/>
</dbReference>
<dbReference type="GO" id="GO:0007193">
    <property type="term" value="P:adenylate cyclase-inhibiting G protein-coupled receptor signaling pathway"/>
    <property type="evidence" value="ECO:0000250"/>
    <property type="project" value="UniProtKB"/>
</dbReference>
<dbReference type="GO" id="GO:0043410">
    <property type="term" value="P:positive regulation of MAPK cascade"/>
    <property type="evidence" value="ECO:0007669"/>
    <property type="project" value="TreeGrafter"/>
</dbReference>
<dbReference type="CDD" id="cd15335">
    <property type="entry name" value="7tmA_5-HT1E"/>
    <property type="match status" value="1"/>
</dbReference>
<dbReference type="FunFam" id="1.20.1070.10:FF:000085">
    <property type="entry name" value="5-hydroxytryptamine receptor 1F"/>
    <property type="match status" value="1"/>
</dbReference>
<dbReference type="Gene3D" id="1.20.1070.10">
    <property type="entry name" value="Rhodopsin 7-helix transmembrane proteins"/>
    <property type="match status" value="1"/>
</dbReference>
<dbReference type="InterPro" id="IPR002231">
    <property type="entry name" value="5HT_rcpt"/>
</dbReference>
<dbReference type="InterPro" id="IPR000276">
    <property type="entry name" value="GPCR_Rhodpsn"/>
</dbReference>
<dbReference type="InterPro" id="IPR017452">
    <property type="entry name" value="GPCR_Rhodpsn_7TM"/>
</dbReference>
<dbReference type="PANTHER" id="PTHR24248:SF196">
    <property type="entry name" value="5-HYDROXYTRYPTAMINE RECEPTOR 1D"/>
    <property type="match status" value="1"/>
</dbReference>
<dbReference type="PANTHER" id="PTHR24248">
    <property type="entry name" value="ADRENERGIC RECEPTOR-RELATED G-PROTEIN COUPLED RECEPTOR"/>
    <property type="match status" value="1"/>
</dbReference>
<dbReference type="Pfam" id="PF00001">
    <property type="entry name" value="7tm_1"/>
    <property type="match status" value="1"/>
</dbReference>
<dbReference type="PRINTS" id="PR00515">
    <property type="entry name" value="5HT1FRECEPTR"/>
</dbReference>
<dbReference type="PRINTS" id="PR01101">
    <property type="entry name" value="5HTRECEPTOR"/>
</dbReference>
<dbReference type="PRINTS" id="PR00237">
    <property type="entry name" value="GPCRRHODOPSN"/>
</dbReference>
<dbReference type="SMART" id="SM01381">
    <property type="entry name" value="7TM_GPCR_Srsx"/>
    <property type="match status" value="1"/>
</dbReference>
<dbReference type="SUPFAM" id="SSF81321">
    <property type="entry name" value="Family A G protein-coupled receptor-like"/>
    <property type="match status" value="1"/>
</dbReference>
<dbReference type="PROSITE" id="PS00237">
    <property type="entry name" value="G_PROTEIN_RECEP_F1_1"/>
    <property type="match status" value="1"/>
</dbReference>
<dbReference type="PROSITE" id="PS50262">
    <property type="entry name" value="G_PROTEIN_RECEP_F1_2"/>
    <property type="match status" value="1"/>
</dbReference>
<comment type="function">
    <text evidence="5">G-protein coupled receptor for 5-hydroxytryptamine (serotonin). Also functions as a receptor for various alkaloids and psychoactive substances. Ligand binding causes a conformation change that triggers signaling via guanine nucleotide-binding proteins (G proteins) and modulates the activity of down-stream effectors, such as adenylate cyclase. Signaling inhibits adenylate cyclase activity.</text>
</comment>
<comment type="subcellular location">
    <subcellularLocation>
        <location evidence="5">Cell membrane</location>
        <topology evidence="5">Multi-pass membrane protein</topology>
    </subcellularLocation>
</comment>
<comment type="tissue specificity">
    <text evidence="5">Detected in the brain with the greatest abundance in the hippocampus, followed by the olfactory bulb. Lower levels are detected in the cortex, thalamus, pons, hypothalamus, midbrain, striatum, and cerebellum.</text>
</comment>
<comment type="similarity">
    <text evidence="4">Belongs to the G-protein coupled receptor 1 family.</text>
</comment>
<accession>Q6VB83</accession>
<sequence>MNITNCTTDASMVVRPKTVTEKMLICMTLVIITTLTMLLNSAVIMAICTTKKLHQPANYLICSLAVTDLLVAVLVMPLSIMYIVMDSWRLGYFICEVWLSVDMTCCTCSILHLCVIALDRYWAITNAIEYARKRTAKRAGLMILTVWTISIFISMPPLFWRSHRQLSPPPSQCTIQHDHVIYTIYSTFGAFYIPLTLILILYYRIYHAAKSLYQKRGSSRHLSNRSTDSQNSFASCKLTQTFCVSDFSTSDPTTEFEKIHASIRIPPFDNDLDHPGERQQISSTRERKAARILGLILGAFILSWLPFFIKELIVGLSIYTVSSEVGDFLTWLGYVNSLINPLLYTSFNEDFKLAFKKLIRCREHT</sequence>
<proteinExistence type="evidence at transcript level"/>
<gene>
    <name type="primary">5HT1E</name>
</gene>
<feature type="chain" id="PRO_0000307929" description="5-hydroxytryptamine receptor 1E">
    <location>
        <begin position="1"/>
        <end position="365"/>
    </location>
</feature>
<feature type="topological domain" description="Extracellular" evidence="1">
    <location>
        <begin position="1"/>
        <end position="22"/>
    </location>
</feature>
<feature type="transmembrane region" description="Helical; Name=1" evidence="1">
    <location>
        <begin position="23"/>
        <end position="47"/>
    </location>
</feature>
<feature type="topological domain" description="Cytoplasmic" evidence="1">
    <location>
        <begin position="48"/>
        <end position="59"/>
    </location>
</feature>
<feature type="transmembrane region" description="Helical; Name=2" evidence="1">
    <location>
        <begin position="60"/>
        <end position="82"/>
    </location>
</feature>
<feature type="topological domain" description="Extracellular" evidence="1">
    <location>
        <begin position="83"/>
        <end position="96"/>
    </location>
</feature>
<feature type="transmembrane region" description="Helical; Name=3" evidence="1">
    <location>
        <begin position="97"/>
        <end position="118"/>
    </location>
</feature>
<feature type="topological domain" description="Cytoplasmic" evidence="1">
    <location>
        <begin position="119"/>
        <end position="138"/>
    </location>
</feature>
<feature type="transmembrane region" description="Helical; Name=4" evidence="1">
    <location>
        <begin position="139"/>
        <end position="160"/>
    </location>
</feature>
<feature type="topological domain" description="Extracellular" evidence="1">
    <location>
        <begin position="161"/>
        <end position="179"/>
    </location>
</feature>
<feature type="transmembrane region" description="Helical; Name=5" evidence="1">
    <location>
        <begin position="180"/>
        <end position="202"/>
    </location>
</feature>
<feature type="topological domain" description="Cytoplasmic" evidence="1">
    <location>
        <begin position="203"/>
        <end position="291"/>
    </location>
</feature>
<feature type="transmembrane region" description="Helical; Name=6" evidence="1">
    <location>
        <begin position="292"/>
        <end position="314"/>
    </location>
</feature>
<feature type="topological domain" description="Extracellular" evidence="1">
    <location>
        <begin position="315"/>
        <end position="324"/>
    </location>
</feature>
<feature type="transmembrane region" description="Helical; Name=7" evidence="1">
    <location>
        <begin position="325"/>
        <end position="347"/>
    </location>
</feature>
<feature type="topological domain" description="Cytoplasmic" evidence="1">
    <location>
        <begin position="348"/>
        <end position="365"/>
    </location>
</feature>
<feature type="short sequence motif" description="DRY motif; important for ligand-induced conformation changes" evidence="1">
    <location>
        <begin position="119"/>
        <end position="121"/>
    </location>
</feature>
<feature type="short sequence motif" description="NPxxY motif; important for ligand-induced conformation changes and signaling" evidence="1">
    <location>
        <begin position="340"/>
        <end position="344"/>
    </location>
</feature>
<feature type="binding site" evidence="2">
    <location>
        <position position="102"/>
    </location>
    <ligand>
        <name>ergotamine</name>
        <dbReference type="ChEBI" id="CHEBI:190463"/>
        <note>agonist</note>
    </ligand>
</feature>
<feature type="binding site" evidence="2">
    <location>
        <position position="107"/>
    </location>
    <ligand>
        <name>ergotamine</name>
        <dbReference type="ChEBI" id="CHEBI:190463"/>
        <note>agonist</note>
    </ligand>
</feature>
<feature type="binding site" evidence="2">
    <location>
        <position position="175"/>
    </location>
    <ligand>
        <name>ergotamine</name>
        <dbReference type="ChEBI" id="CHEBI:190463"/>
        <note>agonist</note>
    </ligand>
</feature>
<feature type="glycosylation site" description="N-linked (GlcNAc...) asparagine" evidence="3">
    <location>
        <position position="2"/>
    </location>
</feature>
<feature type="glycosylation site" description="N-linked (GlcNAc...) asparagine" evidence="3">
    <location>
        <position position="5"/>
    </location>
</feature>
<feature type="disulfide bond" evidence="4">
    <location>
        <begin position="95"/>
        <end position="173"/>
    </location>
</feature>
<name>5HT1E_CAVPO</name>
<keyword id="KW-1003">Cell membrane</keyword>
<keyword id="KW-1015">Disulfide bond</keyword>
<keyword id="KW-0297">G-protein coupled receptor</keyword>
<keyword id="KW-0325">Glycoprotein</keyword>
<keyword id="KW-0472">Membrane</keyword>
<keyword id="KW-0675">Receptor</keyword>
<keyword id="KW-1185">Reference proteome</keyword>
<keyword id="KW-0807">Transducer</keyword>
<keyword id="KW-0812">Transmembrane</keyword>
<keyword id="KW-1133">Transmembrane helix</keyword>
<evidence type="ECO:0000250" key="1"/>
<evidence type="ECO:0000250" key="2">
    <source>
        <dbReference type="UniProtKB" id="P28222"/>
    </source>
</evidence>
<evidence type="ECO:0000255" key="3"/>
<evidence type="ECO:0000255" key="4">
    <source>
        <dbReference type="PROSITE-ProRule" id="PRU00521"/>
    </source>
</evidence>
<evidence type="ECO:0000269" key="5">
    <source>
    </source>
</evidence>
<reference key="1">
    <citation type="journal article" date="2004" name="Eur. J. Pharmacol.">
        <title>Molecular cloning and pharmacological characterization of the guinea pig 5-HT1E receptor.</title>
        <authorList>
            <person name="Bai F."/>
            <person name="Yin T."/>
            <person name="Johnstone E.M."/>
            <person name="Su C."/>
            <person name="Varga G."/>
            <person name="Little S.P."/>
            <person name="Nelson D.L."/>
        </authorList>
    </citation>
    <scope>NUCLEOTIDE SEQUENCE [MRNA]</scope>
    <scope>FUNCTION</scope>
    <scope>SUBCELLULAR LOCATION</scope>
    <scope>TISSUE SPECIFICITY</scope>
    <source>
        <strain>Hartley</strain>
    </source>
</reference>
<organism>
    <name type="scientific">Cavia porcellus</name>
    <name type="common">Guinea pig</name>
    <dbReference type="NCBI Taxonomy" id="10141"/>
    <lineage>
        <taxon>Eukaryota</taxon>
        <taxon>Metazoa</taxon>
        <taxon>Chordata</taxon>
        <taxon>Craniata</taxon>
        <taxon>Vertebrata</taxon>
        <taxon>Euteleostomi</taxon>
        <taxon>Mammalia</taxon>
        <taxon>Eutheria</taxon>
        <taxon>Euarchontoglires</taxon>
        <taxon>Glires</taxon>
        <taxon>Rodentia</taxon>
        <taxon>Hystricomorpha</taxon>
        <taxon>Caviidae</taxon>
        <taxon>Cavia</taxon>
    </lineage>
</organism>